<dbReference type="EMBL" id="AF400189">
    <property type="protein sequence ID" value="AAK92161.1"/>
    <property type="molecule type" value="mRNA"/>
</dbReference>
<dbReference type="SMR" id="Q962T5"/>
<dbReference type="EnsemblMetazoa" id="XM_035582683.2">
    <property type="protein sequence ID" value="XP_035438576.1"/>
    <property type="gene ID" value="LOC118268265"/>
</dbReference>
<dbReference type="OrthoDB" id="1727108at2759"/>
<dbReference type="Proteomes" id="UP000829999">
    <property type="component" value="Unplaced"/>
</dbReference>
<dbReference type="GO" id="GO:0022625">
    <property type="term" value="C:cytosolic large ribosomal subunit"/>
    <property type="evidence" value="ECO:0007669"/>
    <property type="project" value="TreeGrafter"/>
</dbReference>
<dbReference type="GO" id="GO:0003729">
    <property type="term" value="F:mRNA binding"/>
    <property type="evidence" value="ECO:0007669"/>
    <property type="project" value="TreeGrafter"/>
</dbReference>
<dbReference type="GO" id="GO:0003735">
    <property type="term" value="F:structural constituent of ribosome"/>
    <property type="evidence" value="ECO:0007669"/>
    <property type="project" value="InterPro"/>
</dbReference>
<dbReference type="GO" id="GO:0002181">
    <property type="term" value="P:cytoplasmic translation"/>
    <property type="evidence" value="ECO:0007669"/>
    <property type="project" value="TreeGrafter"/>
</dbReference>
<dbReference type="CDD" id="cd00472">
    <property type="entry name" value="Ribosomal_L24e_L24"/>
    <property type="match status" value="1"/>
</dbReference>
<dbReference type="FunFam" id="2.30.170.20:FF:000002">
    <property type="entry name" value="60S ribosomal protein L24"/>
    <property type="match status" value="1"/>
</dbReference>
<dbReference type="Gene3D" id="6.10.250.1270">
    <property type="match status" value="1"/>
</dbReference>
<dbReference type="Gene3D" id="2.30.170.20">
    <property type="entry name" value="Ribosomal protein L24e"/>
    <property type="match status" value="1"/>
</dbReference>
<dbReference type="InterPro" id="IPR038630">
    <property type="entry name" value="L24e/L24_sf"/>
</dbReference>
<dbReference type="InterPro" id="IPR056366">
    <property type="entry name" value="Ribosomal_eL24"/>
</dbReference>
<dbReference type="InterPro" id="IPR000988">
    <property type="entry name" value="Ribosomal_eL24-rel_N"/>
</dbReference>
<dbReference type="InterPro" id="IPR011017">
    <property type="entry name" value="TRASH_dom"/>
</dbReference>
<dbReference type="PANTHER" id="PTHR10792">
    <property type="entry name" value="60S RIBOSOMAL PROTEIN L24"/>
    <property type="match status" value="1"/>
</dbReference>
<dbReference type="PANTHER" id="PTHR10792:SF1">
    <property type="entry name" value="RIBOSOMAL PROTEIN L24"/>
    <property type="match status" value="1"/>
</dbReference>
<dbReference type="Pfam" id="PF01246">
    <property type="entry name" value="Ribosomal_L24e"/>
    <property type="match status" value="1"/>
</dbReference>
<dbReference type="SMART" id="SM00746">
    <property type="entry name" value="TRASH"/>
    <property type="match status" value="1"/>
</dbReference>
<dbReference type="SUPFAM" id="SSF57716">
    <property type="entry name" value="Glucocorticoid receptor-like (DNA-binding domain)"/>
    <property type="match status" value="1"/>
</dbReference>
<protein>
    <recommendedName>
        <fullName evidence="2">Large ribosomal subunit protein eL24</fullName>
    </recommendedName>
    <alternativeName>
        <fullName>60S ribosomal protein L24</fullName>
    </alternativeName>
</protein>
<organism>
    <name type="scientific">Spodoptera frugiperda</name>
    <name type="common">Fall armyworm</name>
    <dbReference type="NCBI Taxonomy" id="7108"/>
    <lineage>
        <taxon>Eukaryota</taxon>
        <taxon>Metazoa</taxon>
        <taxon>Ecdysozoa</taxon>
        <taxon>Arthropoda</taxon>
        <taxon>Hexapoda</taxon>
        <taxon>Insecta</taxon>
        <taxon>Pterygota</taxon>
        <taxon>Neoptera</taxon>
        <taxon>Endopterygota</taxon>
        <taxon>Lepidoptera</taxon>
        <taxon>Glossata</taxon>
        <taxon>Ditrysia</taxon>
        <taxon>Noctuoidea</taxon>
        <taxon>Noctuidae</taxon>
        <taxon>Amphipyrinae</taxon>
        <taxon>Spodoptera</taxon>
    </lineage>
</organism>
<name>RL24_SPOFR</name>
<keyword id="KW-0687">Ribonucleoprotein</keyword>
<keyword id="KW-0689">Ribosomal protein</keyword>
<comment type="similarity">
    <text evidence="2">Belongs to the eukaryotic ribosomal protein eL24 family.</text>
</comment>
<sequence length="155" mass="17406">MKIGLCAYSGYKIYPGHGKTMVKVDGKTFTFLNSKCEAAHLMRRNPRKVTWTVLYRRKFKKGQEEEQTKKRTRRTQKYQRAIVGASLSDIMAKRNMKPEVRKAQRDQAIKAAKEQKKSTKAAKKASAPAPKAKAAPKAKAAKVSQKSAPRVGGKR</sequence>
<evidence type="ECO:0000256" key="1">
    <source>
        <dbReference type="SAM" id="MobiDB-lite"/>
    </source>
</evidence>
<evidence type="ECO:0000305" key="2"/>
<gene>
    <name type="primary">RpL24</name>
</gene>
<proteinExistence type="evidence at transcript level"/>
<feature type="chain" id="PRO_0000136880" description="Large ribosomal subunit protein eL24">
    <location>
        <begin position="1"/>
        <end position="155"/>
    </location>
</feature>
<feature type="region of interest" description="Disordered" evidence="1">
    <location>
        <begin position="92"/>
        <end position="155"/>
    </location>
</feature>
<feature type="compositionally biased region" description="Basic and acidic residues" evidence="1">
    <location>
        <begin position="96"/>
        <end position="117"/>
    </location>
</feature>
<feature type="compositionally biased region" description="Low complexity" evidence="1">
    <location>
        <begin position="124"/>
        <end position="133"/>
    </location>
</feature>
<accession>Q962T5</accession>
<reference key="1">
    <citation type="journal article" date="2003" name="Bioinformatics">
        <title>Annotation pattern of ESTs from Spodoptera frugiperda Sf9 cells and analysis of the ribosomal protein genes reveal insect-specific features and unexpectedly low codon usage bias.</title>
        <authorList>
            <person name="Landais I."/>
            <person name="Ogliastro M."/>
            <person name="Mita K."/>
            <person name="Nohata J."/>
            <person name="Lopez-Ferber M."/>
            <person name="Duonor-Cerutti M."/>
            <person name="Shimada T."/>
            <person name="Fournier P."/>
            <person name="Devauchelle G."/>
        </authorList>
    </citation>
    <scope>NUCLEOTIDE SEQUENCE [LARGE SCALE MRNA]</scope>
</reference>